<accession>P0A2L5</accession>
<accession>Q56068</accession>
<reference key="1">
    <citation type="journal article" date="1997" name="J. Bacteriol.">
        <title>The Salmonella typhimurium mar locus: molecular and genetic analyses and assessment of its role in virulence.</title>
        <authorList>
            <person name="Sulavik M.C."/>
            <person name="Dazer M."/>
            <person name="Miller P.F."/>
        </authorList>
    </citation>
    <scope>NUCLEOTIDE SEQUENCE [GENOMIC DNA]</scope>
    <source>
        <strain>X3181</strain>
    </source>
</reference>
<reference key="2">
    <citation type="journal article" date="2001" name="Nature">
        <title>Complete genome sequence of Salmonella enterica serovar Typhimurium LT2.</title>
        <authorList>
            <person name="McClelland M."/>
            <person name="Sanderson K.E."/>
            <person name="Spieth J."/>
            <person name="Clifton S.W."/>
            <person name="Latreille P."/>
            <person name="Courtney L."/>
            <person name="Porwollik S."/>
            <person name="Ali J."/>
            <person name="Dante M."/>
            <person name="Du F."/>
            <person name="Hou S."/>
            <person name="Layman D."/>
            <person name="Leonard S."/>
            <person name="Nguyen C."/>
            <person name="Scott K."/>
            <person name="Holmes A."/>
            <person name="Grewal N."/>
            <person name="Mulvaney E."/>
            <person name="Ryan E."/>
            <person name="Sun H."/>
            <person name="Florea L."/>
            <person name="Miller W."/>
            <person name="Stoneking T."/>
            <person name="Nhan M."/>
            <person name="Waterston R."/>
            <person name="Wilson R.K."/>
        </authorList>
    </citation>
    <scope>NUCLEOTIDE SEQUENCE [LARGE SCALE GENOMIC DNA]</scope>
    <source>
        <strain>LT2 / SGSC1412 / ATCC 700720</strain>
    </source>
</reference>
<protein>
    <recommendedName>
        <fullName>UPF0056 inner membrane protein MarC</fullName>
    </recommendedName>
</protein>
<organism>
    <name type="scientific">Salmonella typhimurium (strain LT2 / SGSC1412 / ATCC 700720)</name>
    <dbReference type="NCBI Taxonomy" id="99287"/>
    <lineage>
        <taxon>Bacteria</taxon>
        <taxon>Pseudomonadati</taxon>
        <taxon>Pseudomonadota</taxon>
        <taxon>Gammaproteobacteria</taxon>
        <taxon>Enterobacterales</taxon>
        <taxon>Enterobacteriaceae</taxon>
        <taxon>Salmonella</taxon>
    </lineage>
</organism>
<name>MARC_SALTY</name>
<gene>
    <name type="primary">marC</name>
    <name type="ordered locus">STM1521</name>
</gene>
<feature type="chain" id="PRO_0000156899" description="UPF0056 inner membrane protein MarC">
    <location>
        <begin position="1"/>
        <end position="221"/>
    </location>
</feature>
<feature type="topological domain" description="Periplasmic" evidence="2">
    <location>
        <begin position="1"/>
        <end position="7"/>
    </location>
</feature>
<feature type="transmembrane region" description="Helical" evidence="2">
    <location>
        <begin position="8"/>
        <end position="28"/>
    </location>
</feature>
<feature type="topological domain" description="Cytoplasmic" evidence="2">
    <location>
        <begin position="29"/>
        <end position="45"/>
    </location>
</feature>
<feature type="transmembrane region" description="Helical" evidence="2">
    <location>
        <begin position="46"/>
        <end position="66"/>
    </location>
</feature>
<feature type="topological domain" description="Periplasmic" evidence="2">
    <location>
        <begin position="67"/>
        <end position="68"/>
    </location>
</feature>
<feature type="transmembrane region" description="Helical" evidence="2">
    <location>
        <begin position="69"/>
        <end position="89"/>
    </location>
</feature>
<feature type="topological domain" description="Cytoplasmic" evidence="2">
    <location>
        <begin position="90"/>
        <end position="118"/>
    </location>
</feature>
<feature type="transmembrane region" description="Helical" evidence="2">
    <location>
        <begin position="119"/>
        <end position="139"/>
    </location>
</feature>
<feature type="topological domain" description="Periplasmic" evidence="2">
    <location>
        <begin position="140"/>
        <end position="154"/>
    </location>
</feature>
<feature type="transmembrane region" description="Helical" evidence="2">
    <location>
        <begin position="155"/>
        <end position="175"/>
    </location>
</feature>
<feature type="topological domain" description="Cytoplasmic" evidence="2">
    <location>
        <begin position="176"/>
        <end position="196"/>
    </location>
</feature>
<feature type="transmembrane region" description="Helical" evidence="2">
    <location>
        <begin position="197"/>
        <end position="217"/>
    </location>
</feature>
<feature type="topological domain" description="Periplasmic" evidence="2">
    <location>
        <begin position="218"/>
        <end position="221"/>
    </location>
</feature>
<keyword id="KW-0997">Cell inner membrane</keyword>
<keyword id="KW-1003">Cell membrane</keyword>
<keyword id="KW-0472">Membrane</keyword>
<keyword id="KW-1185">Reference proteome</keyword>
<keyword id="KW-0812">Transmembrane</keyword>
<keyword id="KW-1133">Transmembrane helix</keyword>
<evidence type="ECO:0000250" key="1"/>
<evidence type="ECO:0000255" key="2"/>
<evidence type="ECO:0000305" key="3"/>
<proteinExistence type="inferred from homology"/>
<comment type="subcellular location">
    <subcellularLocation>
        <location evidence="1">Cell inner membrane</location>
        <topology evidence="1">Multi-pass membrane protein</topology>
    </subcellularLocation>
</comment>
<comment type="similarity">
    <text evidence="3">Belongs to the UPF0056 (MarC) family.</text>
</comment>
<dbReference type="EMBL" id="U54468">
    <property type="protein sequence ID" value="AAC44975.1"/>
    <property type="molecule type" value="Genomic_DNA"/>
</dbReference>
<dbReference type="EMBL" id="AE006468">
    <property type="protein sequence ID" value="AAL20440.1"/>
    <property type="molecule type" value="Genomic_DNA"/>
</dbReference>
<dbReference type="PIR" id="T11755">
    <property type="entry name" value="T11755"/>
</dbReference>
<dbReference type="RefSeq" id="NP_460481.1">
    <property type="nucleotide sequence ID" value="NC_003197.2"/>
</dbReference>
<dbReference type="RefSeq" id="WP_000968968.1">
    <property type="nucleotide sequence ID" value="NC_003197.2"/>
</dbReference>
<dbReference type="STRING" id="99287.STM1521"/>
<dbReference type="PaxDb" id="99287-STM1521"/>
<dbReference type="GeneID" id="1253039"/>
<dbReference type="KEGG" id="stm:STM1521"/>
<dbReference type="PATRIC" id="fig|99287.12.peg.1609"/>
<dbReference type="HOGENOM" id="CLU_079909_2_0_6"/>
<dbReference type="OMA" id="MLIMIDP"/>
<dbReference type="PhylomeDB" id="P0A2L5"/>
<dbReference type="BioCyc" id="SENT99287:STM1521-MONOMER"/>
<dbReference type="Proteomes" id="UP000001014">
    <property type="component" value="Chromosome"/>
</dbReference>
<dbReference type="GO" id="GO:0005886">
    <property type="term" value="C:plasma membrane"/>
    <property type="evidence" value="ECO:0000318"/>
    <property type="project" value="GO_Central"/>
</dbReference>
<dbReference type="InterPro" id="IPR002771">
    <property type="entry name" value="Multi_antbiot-R_MarC"/>
</dbReference>
<dbReference type="NCBIfam" id="TIGR00427">
    <property type="entry name" value="NAAT family transporter"/>
    <property type="match status" value="1"/>
</dbReference>
<dbReference type="NCBIfam" id="NF008228">
    <property type="entry name" value="PRK10995.1"/>
    <property type="match status" value="1"/>
</dbReference>
<dbReference type="PANTHER" id="PTHR33508:SF2">
    <property type="entry name" value="UPF0056 INNER MEMBRANE PROTEIN MARC"/>
    <property type="match status" value="1"/>
</dbReference>
<dbReference type="PANTHER" id="PTHR33508">
    <property type="entry name" value="UPF0056 MEMBRANE PROTEIN YHCE"/>
    <property type="match status" value="1"/>
</dbReference>
<dbReference type="Pfam" id="PF01914">
    <property type="entry name" value="MarC"/>
    <property type="match status" value="1"/>
</dbReference>
<sequence length="221" mass="23607">MMDLFKAIGLGLVVLLPLANPLTTVALFLGLAGNMNSAERNRQSYMASVYVFAIMMVAYYAGQLVMNTFGISIPGLRIAGGLIVAFIGFRMLFPQQKAHESPEAKSKSEELADEPTANIAFVPLAMPSTAGPGTIAMIISSASTVRHGGEFPDWVIMVAPPIIFLAVAVILWGCLRSSGAIMRLVGKGGIEAISRLMGFLLVCMGVQFIINGVLEIIKTYH</sequence>